<comment type="function">
    <text evidence="1">Binds directly to 23S ribosomal RNA and is necessary for the in vitro assembly process of the 50S ribosomal subunit. It is not involved in the protein synthesizing functions of that subunit.</text>
</comment>
<comment type="similarity">
    <text evidence="1">Belongs to the bacterial ribosomal protein bL20 family.</text>
</comment>
<reference key="1">
    <citation type="journal article" date="2002" name="Environ. Microbiol.">
        <title>Complete genome sequence and comparative analysis of the metabolically versatile Pseudomonas putida KT2440.</title>
        <authorList>
            <person name="Nelson K.E."/>
            <person name="Weinel C."/>
            <person name="Paulsen I.T."/>
            <person name="Dodson R.J."/>
            <person name="Hilbert H."/>
            <person name="Martins dos Santos V.A.P."/>
            <person name="Fouts D.E."/>
            <person name="Gill S.R."/>
            <person name="Pop M."/>
            <person name="Holmes M."/>
            <person name="Brinkac L.M."/>
            <person name="Beanan M.J."/>
            <person name="DeBoy R.T."/>
            <person name="Daugherty S.C."/>
            <person name="Kolonay J.F."/>
            <person name="Madupu R."/>
            <person name="Nelson W.C."/>
            <person name="White O."/>
            <person name="Peterson J.D."/>
            <person name="Khouri H.M."/>
            <person name="Hance I."/>
            <person name="Chris Lee P."/>
            <person name="Holtzapple E.K."/>
            <person name="Scanlan D."/>
            <person name="Tran K."/>
            <person name="Moazzez A."/>
            <person name="Utterback T.R."/>
            <person name="Rizzo M."/>
            <person name="Lee K."/>
            <person name="Kosack D."/>
            <person name="Moestl D."/>
            <person name="Wedler H."/>
            <person name="Lauber J."/>
            <person name="Stjepandic D."/>
            <person name="Hoheisel J."/>
            <person name="Straetz M."/>
            <person name="Heim S."/>
            <person name="Kiewitz C."/>
            <person name="Eisen J.A."/>
            <person name="Timmis K.N."/>
            <person name="Duesterhoeft A."/>
            <person name="Tuemmler B."/>
            <person name="Fraser C.M."/>
        </authorList>
    </citation>
    <scope>NUCLEOTIDE SEQUENCE [LARGE SCALE GENOMIC DNA]</scope>
    <source>
        <strain>ATCC 47054 / DSM 6125 / CFBP 8728 / NCIMB 11950 / KT2440</strain>
    </source>
</reference>
<sequence length="118" mass="13280">MARVKRGVIARKRHKKILKLAKGYYGARSRVFRVAKQAVIKAGQYAYRDRRQKKRQFRALWIARINAGARTNGLSYSRLIAGLKKASIEIDRKVLADLAVNEKAAFAAIVEKAKAVLA</sequence>
<gene>
    <name evidence="1" type="primary">rplT</name>
    <name type="ordered locus">PP_2468</name>
</gene>
<organism>
    <name type="scientific">Pseudomonas putida (strain ATCC 47054 / DSM 6125 / CFBP 8728 / NCIMB 11950 / KT2440)</name>
    <dbReference type="NCBI Taxonomy" id="160488"/>
    <lineage>
        <taxon>Bacteria</taxon>
        <taxon>Pseudomonadati</taxon>
        <taxon>Pseudomonadota</taxon>
        <taxon>Gammaproteobacteria</taxon>
        <taxon>Pseudomonadales</taxon>
        <taxon>Pseudomonadaceae</taxon>
        <taxon>Pseudomonas</taxon>
    </lineage>
</organism>
<name>RL20_PSEPK</name>
<protein>
    <recommendedName>
        <fullName evidence="1">Large ribosomal subunit protein bL20</fullName>
    </recommendedName>
    <alternativeName>
        <fullName evidence="2">50S ribosomal protein L20</fullName>
    </alternativeName>
</protein>
<proteinExistence type="inferred from homology"/>
<keyword id="KW-1185">Reference proteome</keyword>
<keyword id="KW-0687">Ribonucleoprotein</keyword>
<keyword id="KW-0689">Ribosomal protein</keyword>
<keyword id="KW-0694">RNA-binding</keyword>
<keyword id="KW-0699">rRNA-binding</keyword>
<feature type="chain" id="PRO_0000177208" description="Large ribosomal subunit protein bL20">
    <location>
        <begin position="1"/>
        <end position="118"/>
    </location>
</feature>
<dbReference type="EMBL" id="AE015451">
    <property type="protein sequence ID" value="AAN68080.1"/>
    <property type="molecule type" value="Genomic_DNA"/>
</dbReference>
<dbReference type="RefSeq" id="NP_744616.1">
    <property type="nucleotide sequence ID" value="NC_002947.4"/>
</dbReference>
<dbReference type="RefSeq" id="WP_003250671.1">
    <property type="nucleotide sequence ID" value="NZ_CP169744.1"/>
</dbReference>
<dbReference type="SMR" id="Q88K24"/>
<dbReference type="STRING" id="160488.PP_2468"/>
<dbReference type="PaxDb" id="160488-PP_2468"/>
<dbReference type="GeneID" id="97167549"/>
<dbReference type="KEGG" id="ppu:PP_2468"/>
<dbReference type="PATRIC" id="fig|160488.4.peg.2614"/>
<dbReference type="eggNOG" id="COG0292">
    <property type="taxonomic scope" value="Bacteria"/>
</dbReference>
<dbReference type="HOGENOM" id="CLU_123265_0_1_6"/>
<dbReference type="OrthoDB" id="9808966at2"/>
<dbReference type="PhylomeDB" id="Q88K24"/>
<dbReference type="BioCyc" id="PPUT160488:G1G01-2639-MONOMER"/>
<dbReference type="Proteomes" id="UP000000556">
    <property type="component" value="Chromosome"/>
</dbReference>
<dbReference type="GO" id="GO:1990904">
    <property type="term" value="C:ribonucleoprotein complex"/>
    <property type="evidence" value="ECO:0007669"/>
    <property type="project" value="UniProtKB-KW"/>
</dbReference>
<dbReference type="GO" id="GO:0005840">
    <property type="term" value="C:ribosome"/>
    <property type="evidence" value="ECO:0007669"/>
    <property type="project" value="UniProtKB-KW"/>
</dbReference>
<dbReference type="GO" id="GO:0019843">
    <property type="term" value="F:rRNA binding"/>
    <property type="evidence" value="ECO:0007669"/>
    <property type="project" value="UniProtKB-UniRule"/>
</dbReference>
<dbReference type="GO" id="GO:0003735">
    <property type="term" value="F:structural constituent of ribosome"/>
    <property type="evidence" value="ECO:0007669"/>
    <property type="project" value="InterPro"/>
</dbReference>
<dbReference type="GO" id="GO:0000027">
    <property type="term" value="P:ribosomal large subunit assembly"/>
    <property type="evidence" value="ECO:0007669"/>
    <property type="project" value="UniProtKB-UniRule"/>
</dbReference>
<dbReference type="GO" id="GO:0006412">
    <property type="term" value="P:translation"/>
    <property type="evidence" value="ECO:0007669"/>
    <property type="project" value="InterPro"/>
</dbReference>
<dbReference type="CDD" id="cd07026">
    <property type="entry name" value="Ribosomal_L20"/>
    <property type="match status" value="1"/>
</dbReference>
<dbReference type="FunFam" id="1.10.1900.20:FF:000001">
    <property type="entry name" value="50S ribosomal protein L20"/>
    <property type="match status" value="1"/>
</dbReference>
<dbReference type="Gene3D" id="6.10.160.10">
    <property type="match status" value="1"/>
</dbReference>
<dbReference type="Gene3D" id="1.10.1900.20">
    <property type="entry name" value="Ribosomal protein L20"/>
    <property type="match status" value="1"/>
</dbReference>
<dbReference type="HAMAP" id="MF_00382">
    <property type="entry name" value="Ribosomal_bL20"/>
    <property type="match status" value="1"/>
</dbReference>
<dbReference type="InterPro" id="IPR005813">
    <property type="entry name" value="Ribosomal_bL20"/>
</dbReference>
<dbReference type="InterPro" id="IPR049946">
    <property type="entry name" value="RIBOSOMAL_L20_CS"/>
</dbReference>
<dbReference type="InterPro" id="IPR035566">
    <property type="entry name" value="Ribosomal_protein_bL20_C"/>
</dbReference>
<dbReference type="NCBIfam" id="TIGR01032">
    <property type="entry name" value="rplT_bact"/>
    <property type="match status" value="1"/>
</dbReference>
<dbReference type="PANTHER" id="PTHR10986">
    <property type="entry name" value="39S RIBOSOMAL PROTEIN L20"/>
    <property type="match status" value="1"/>
</dbReference>
<dbReference type="Pfam" id="PF00453">
    <property type="entry name" value="Ribosomal_L20"/>
    <property type="match status" value="1"/>
</dbReference>
<dbReference type="PRINTS" id="PR00062">
    <property type="entry name" value="RIBOSOMALL20"/>
</dbReference>
<dbReference type="SUPFAM" id="SSF74731">
    <property type="entry name" value="Ribosomal protein L20"/>
    <property type="match status" value="1"/>
</dbReference>
<dbReference type="PROSITE" id="PS00937">
    <property type="entry name" value="RIBOSOMAL_L20"/>
    <property type="match status" value="1"/>
</dbReference>
<accession>Q88K24</accession>
<evidence type="ECO:0000255" key="1">
    <source>
        <dbReference type="HAMAP-Rule" id="MF_00382"/>
    </source>
</evidence>
<evidence type="ECO:0000305" key="2"/>